<dbReference type="EMBL" id="AAEY01000024">
    <property type="protein sequence ID" value="EAL20922.1"/>
    <property type="molecule type" value="Genomic_DNA"/>
</dbReference>
<dbReference type="RefSeq" id="XP_775569.1">
    <property type="nucleotide sequence ID" value="XM_770476.1"/>
</dbReference>
<dbReference type="SMR" id="P0CN65"/>
<dbReference type="GeneID" id="4936293"/>
<dbReference type="KEGG" id="cnb:CNBE2830"/>
<dbReference type="VEuPathDB" id="FungiDB:CNBE2830"/>
<dbReference type="HOGENOM" id="CLU_004414_0_0_1"/>
<dbReference type="OrthoDB" id="3181at5206"/>
<dbReference type="GO" id="GO:0005737">
    <property type="term" value="C:cytoplasm"/>
    <property type="evidence" value="ECO:0007669"/>
    <property type="project" value="UniProtKB-SubCell"/>
</dbReference>
<dbReference type="GO" id="GO:0016363">
    <property type="term" value="C:nuclear matrix"/>
    <property type="evidence" value="ECO:0007669"/>
    <property type="project" value="TreeGrafter"/>
</dbReference>
<dbReference type="GO" id="GO:0005643">
    <property type="term" value="C:nuclear pore"/>
    <property type="evidence" value="ECO:0007669"/>
    <property type="project" value="TreeGrafter"/>
</dbReference>
<dbReference type="GO" id="GO:0031267">
    <property type="term" value="F:small GTPase binding"/>
    <property type="evidence" value="ECO:0007669"/>
    <property type="project" value="InterPro"/>
</dbReference>
<dbReference type="GO" id="GO:0000049">
    <property type="term" value="F:tRNA binding"/>
    <property type="evidence" value="ECO:0007669"/>
    <property type="project" value="UniProtKB-KW"/>
</dbReference>
<dbReference type="GO" id="GO:0008033">
    <property type="term" value="P:tRNA processing"/>
    <property type="evidence" value="ECO:0007669"/>
    <property type="project" value="UniProtKB-KW"/>
</dbReference>
<dbReference type="GO" id="GO:0071528">
    <property type="term" value="P:tRNA re-export from nucleus"/>
    <property type="evidence" value="ECO:0007669"/>
    <property type="project" value="InterPro"/>
</dbReference>
<dbReference type="Gene3D" id="1.25.10.10">
    <property type="entry name" value="Leucine-rich Repeat Variant"/>
    <property type="match status" value="1"/>
</dbReference>
<dbReference type="InterPro" id="IPR011989">
    <property type="entry name" value="ARM-like"/>
</dbReference>
<dbReference type="InterPro" id="IPR016024">
    <property type="entry name" value="ARM-type_fold"/>
</dbReference>
<dbReference type="InterPro" id="IPR013598">
    <property type="entry name" value="Exportin-1/Importin-b-like"/>
</dbReference>
<dbReference type="InterPro" id="IPR045546">
    <property type="entry name" value="Exportin-T_C"/>
</dbReference>
<dbReference type="InterPro" id="IPR040017">
    <property type="entry name" value="XPOT"/>
</dbReference>
<dbReference type="PANTHER" id="PTHR15952:SF11">
    <property type="entry name" value="EXPORTIN-T"/>
    <property type="match status" value="1"/>
</dbReference>
<dbReference type="PANTHER" id="PTHR15952">
    <property type="entry name" value="EXPORTIN-T/LOS1"/>
    <property type="match status" value="1"/>
</dbReference>
<dbReference type="Pfam" id="PF19282">
    <property type="entry name" value="Exportin-T"/>
    <property type="match status" value="2"/>
</dbReference>
<dbReference type="Pfam" id="PF08389">
    <property type="entry name" value="Xpo1"/>
    <property type="match status" value="1"/>
</dbReference>
<dbReference type="SUPFAM" id="SSF48371">
    <property type="entry name" value="ARM repeat"/>
    <property type="match status" value="1"/>
</dbReference>
<reference key="1">
    <citation type="journal article" date="2005" name="Science">
        <title>The genome of the basidiomycetous yeast and human pathogen Cryptococcus neoformans.</title>
        <authorList>
            <person name="Loftus B.J."/>
            <person name="Fung E."/>
            <person name="Roncaglia P."/>
            <person name="Rowley D."/>
            <person name="Amedeo P."/>
            <person name="Bruno D."/>
            <person name="Vamathevan J."/>
            <person name="Miranda M."/>
            <person name="Anderson I.J."/>
            <person name="Fraser J.A."/>
            <person name="Allen J.E."/>
            <person name="Bosdet I.E."/>
            <person name="Brent M.R."/>
            <person name="Chiu R."/>
            <person name="Doering T.L."/>
            <person name="Donlin M.J."/>
            <person name="D'Souza C.A."/>
            <person name="Fox D.S."/>
            <person name="Grinberg V."/>
            <person name="Fu J."/>
            <person name="Fukushima M."/>
            <person name="Haas B.J."/>
            <person name="Huang J.C."/>
            <person name="Janbon G."/>
            <person name="Jones S.J.M."/>
            <person name="Koo H.L."/>
            <person name="Krzywinski M.I."/>
            <person name="Kwon-Chung K.J."/>
            <person name="Lengeler K.B."/>
            <person name="Maiti R."/>
            <person name="Marra M.A."/>
            <person name="Marra R.E."/>
            <person name="Mathewson C.A."/>
            <person name="Mitchell T.G."/>
            <person name="Pertea M."/>
            <person name="Riggs F.R."/>
            <person name="Salzberg S.L."/>
            <person name="Schein J.E."/>
            <person name="Shvartsbeyn A."/>
            <person name="Shin H."/>
            <person name="Shumway M."/>
            <person name="Specht C.A."/>
            <person name="Suh B.B."/>
            <person name="Tenney A."/>
            <person name="Utterback T.R."/>
            <person name="Wickes B.L."/>
            <person name="Wortman J.R."/>
            <person name="Wye N.H."/>
            <person name="Kronstad J.W."/>
            <person name="Lodge J.K."/>
            <person name="Heitman J."/>
            <person name="Davis R.W."/>
            <person name="Fraser C.M."/>
            <person name="Hyman R.W."/>
        </authorList>
    </citation>
    <scope>NUCLEOTIDE SEQUENCE [LARGE SCALE GENOMIC DNA]</scope>
    <source>
        <strain>B-3501A</strain>
    </source>
</reference>
<organism>
    <name type="scientific">Cryptococcus neoformans var. neoformans serotype D (strain B-3501A)</name>
    <name type="common">Filobasidiella neoformans</name>
    <dbReference type="NCBI Taxonomy" id="283643"/>
    <lineage>
        <taxon>Eukaryota</taxon>
        <taxon>Fungi</taxon>
        <taxon>Dikarya</taxon>
        <taxon>Basidiomycota</taxon>
        <taxon>Agaricomycotina</taxon>
        <taxon>Tremellomycetes</taxon>
        <taxon>Tremellales</taxon>
        <taxon>Cryptococcaceae</taxon>
        <taxon>Cryptococcus</taxon>
        <taxon>Cryptococcus neoformans species complex</taxon>
    </lineage>
</organism>
<protein>
    <recommendedName>
        <fullName>Exportin-T</fullName>
    </recommendedName>
    <alternativeName>
        <fullName>Exportin(tRNA)</fullName>
    </alternativeName>
    <alternativeName>
        <fullName>Karyopherin-beta</fullName>
    </alternativeName>
    <alternativeName>
        <fullName>tRNA exportin</fullName>
    </alternativeName>
</protein>
<keyword id="KW-0963">Cytoplasm</keyword>
<keyword id="KW-0539">Nucleus</keyword>
<keyword id="KW-0694">RNA-binding</keyword>
<keyword id="KW-0813">Transport</keyword>
<keyword id="KW-0819">tRNA processing</keyword>
<keyword id="KW-0820">tRNA-binding</keyword>
<sequence length="1139" mass="125740">MAATSPHLTSIPQAVRVAASIDPSIDPGLKQQAIDYLTKVKQLSEETWQLYLQGAGAPGPSTTGRDGKEKLETDMRMFCLQVVDTVLIQKPEVMGADAVQGMYEAIVEFIQVEYIGGSCEGGQGFLRNKLAFTISQLFLRAFPSHIPTFLHPFFALLSPPTSSPPNLHPQLLTIRLLLEIAQEIHDTTLKTARIMTKERQERDGVVRDVIRSSGDDKTAVQGMLGIIEKGLEQMNSGNSSDKWAEAVDATLKTLSAWIPWIDLGVALNPTTLPFYHRLLHQPILSFRTATAGIYRTLVAKGIQDPSSRLQVLRVLAPVAVIDPLETETRGGKSEEVATFRASLGVVLSAYGVALIGISDNTEVAEQLRNEAEEMMNPALPLLLRFLSDRQYEVPLSVSPFVSDLLRIYKRMYKPPNPSTKAGQAPSPPSTLPQLSPERRQFLASMLDILIRQLAWPEDTEWEAPGNEDELDEDIAAFKNFRGSCRSFIESIAQIDKSLHTEVVARIVIATLDAYASGGGAAAVPWQQAELAMHLVYTFGEVSKNSTRAAFYELPPEMATKAARNKLRAAQGSGRTTPSSSDNVDLGPSSNNDRLEYEQFPLSPLGQLLTRCMTSGISSYPHPSVTLQYFEIIVRYIEFWKAKPETLPGLFEALLDGQGIHNSDEGVRRRCFYLFSKLCKDCRNDTVEGMVSPILDSMRDMMVINAELPPTDTPDEDPLIKATTGKSYVADQLYLFEASGNLVYLTKADPAKQMALLEAVAGPLLSGLGSGVERARVDENDLQAVLQVHHHLMALGHFAKGFPIVPDKLVELLPYTGPFKQMAEALLQAIEILKRRRVVRDAARFAFSQFANAIGTPVAELVPRFVSAVVTEFEPSELVDFLLFLQLLMHRLQGSTFETMDMLLLPLLSRIFTVLQQPVTGTDEAQVHARLKDAYLAFFTSLMNENLDGIFITDRNKPEFENVLTTLFNLTQDYSDGASQRLAFGFFSRSVIAWGTSPEAAARPSVFAESAMASQSKMVSGGGTAQPNAHAVTQEQRAKQCLPGYENFIYQRLLPAAFEVPANSQFNIRGGQLIVHEAAVLVRNTVQARGQEAIDFMLSDLLRRLNCPSDIANQLIASLTTQQAKDFKKTFFDFIKAMRG</sequence>
<name>XPOT_CRYNB</name>
<proteinExistence type="inferred from homology"/>
<gene>
    <name type="primary">LOS1</name>
    <name type="ordered locus">CNBE2830</name>
</gene>
<feature type="chain" id="PRO_0000410087" description="Exportin-T">
    <location>
        <begin position="1"/>
        <end position="1139"/>
    </location>
</feature>
<feature type="region of interest" description="Disordered" evidence="2">
    <location>
        <begin position="562"/>
        <end position="589"/>
    </location>
</feature>
<feature type="compositionally biased region" description="Polar residues" evidence="2">
    <location>
        <begin position="572"/>
        <end position="589"/>
    </location>
</feature>
<evidence type="ECO:0000250" key="1"/>
<evidence type="ECO:0000256" key="2">
    <source>
        <dbReference type="SAM" id="MobiDB-lite"/>
    </source>
</evidence>
<evidence type="ECO:0000305" key="3"/>
<comment type="function">
    <text evidence="1">tRNA nucleus export receptor which facilitates tRNA translocation across the nuclear pore complex. Involved in pre-tRNA splicing, probably by affecting the interaction of pre-tRNA with splicing endonuclease (By similarity).</text>
</comment>
<comment type="subcellular location">
    <subcellularLocation>
        <location evidence="1">Nucleus</location>
    </subcellularLocation>
    <subcellularLocation>
        <location evidence="1">Cytoplasm</location>
    </subcellularLocation>
    <text evidence="1">Shuttles between the nucleus and the cytoplasm.</text>
</comment>
<comment type="similarity">
    <text evidence="3">Belongs to the exportin family.</text>
</comment>
<accession>P0CN65</accession>
<accession>Q55S99</accession>
<accession>Q5KGP6</accession>